<comment type="function">
    <text evidence="3">Secreted effector that completely suppresses the host cell death induced by cell death-inducing proteins.</text>
</comment>
<comment type="subcellular location">
    <subcellularLocation>
        <location evidence="3">Secreted</location>
    </subcellularLocation>
    <subcellularLocation>
        <location evidence="6">Host cell</location>
    </subcellularLocation>
</comment>
<comment type="domain">
    <text evidence="6">The RxLR-dEER motif acts to carry the protein into the host cell cytoplasm through binding to cell surface phosphatidylinositol-3-phosphate.</text>
</comment>
<comment type="similarity">
    <text evidence="5">Belongs to the RxLR effector family.</text>
</comment>
<gene>
    <name evidence="4" type="primary">RXLR32</name>
</gene>
<evidence type="ECO:0000255" key="1"/>
<evidence type="ECO:0000256" key="2">
    <source>
        <dbReference type="SAM" id="MobiDB-lite"/>
    </source>
</evidence>
<evidence type="ECO:0000269" key="3">
    <source>
    </source>
</evidence>
<evidence type="ECO:0000303" key="4">
    <source>
    </source>
</evidence>
<evidence type="ECO:0000305" key="5"/>
<evidence type="ECO:0000305" key="6">
    <source>
    </source>
</evidence>
<keyword id="KW-0964">Secreted</keyword>
<keyword id="KW-0732">Signal</keyword>
<keyword id="KW-0843">Virulence</keyword>
<dbReference type="GO" id="GO:0005576">
    <property type="term" value="C:extracellular region"/>
    <property type="evidence" value="ECO:0007669"/>
    <property type="project" value="UniProtKB-SubCell"/>
</dbReference>
<dbReference type="GO" id="GO:0043657">
    <property type="term" value="C:host cell"/>
    <property type="evidence" value="ECO:0007669"/>
    <property type="project" value="UniProtKB-SubCell"/>
</dbReference>
<protein>
    <recommendedName>
        <fullName evidence="4">Secreted RxLR effector protein 32</fullName>
    </recommendedName>
</protein>
<feature type="signal peptide" evidence="1">
    <location>
        <begin position="1"/>
        <end position="21"/>
    </location>
</feature>
<feature type="chain" id="PRO_0000447912" description="Secreted RxLR effector protein 32">
    <location>
        <begin position="22"/>
        <end position="268"/>
    </location>
</feature>
<feature type="region of interest" description="Disordered" evidence="2">
    <location>
        <begin position="120"/>
        <end position="257"/>
    </location>
</feature>
<feature type="short sequence motif" description="RxLR-dEER" evidence="6">
    <location>
        <begin position="50"/>
        <end position="71"/>
    </location>
</feature>
<feature type="compositionally biased region" description="Low complexity" evidence="2">
    <location>
        <begin position="148"/>
        <end position="161"/>
    </location>
</feature>
<feature type="compositionally biased region" description="Basic and acidic residues" evidence="2">
    <location>
        <begin position="212"/>
        <end position="224"/>
    </location>
</feature>
<organism>
    <name type="scientific">Plasmopara viticola</name>
    <name type="common">Downy mildew of grapevine</name>
    <name type="synonym">Botrytis viticola</name>
    <dbReference type="NCBI Taxonomy" id="143451"/>
    <lineage>
        <taxon>Eukaryota</taxon>
        <taxon>Sar</taxon>
        <taxon>Stramenopiles</taxon>
        <taxon>Oomycota</taxon>
        <taxon>Peronosporales</taxon>
        <taxon>Peronosporaceae</taxon>
        <taxon>Plasmopara</taxon>
    </lineage>
</organism>
<reference key="1">
    <citation type="journal article" date="2018" name="Front. Plant Sci.">
        <title>In planta functional analysis and subcellular localization of the oomycete pathogen Plasmopara viticola candidate RXLR effector repertoire.</title>
        <authorList>
            <person name="Liu Y."/>
            <person name="Lan X."/>
            <person name="Song S."/>
            <person name="Yin L."/>
            <person name="Dry I.B."/>
            <person name="Qu J."/>
            <person name="Xiang J."/>
            <person name="Lu J."/>
        </authorList>
    </citation>
    <scope>NUCLEOTIDE SEQUENCE [MRNA]</scope>
    <scope>DOMAIN</scope>
    <scope>FUNCTION</scope>
    <scope>SUBCELLULAR LOCATION</scope>
</reference>
<name>RLR32_PLAVT</name>
<proteinExistence type="evidence at transcript level"/>
<sequence>MRGAYYVAFALLVAASTRTAAEPDQAEPHIAPNNDYMTSGGAFNKMLPRRILRESPDPKDRLPVYASDEERMVNRLSNGNSIAKGLERTIMKAANVLRTNGEDVIANAAKPIKNYNRLRPKLEIKKSKRQRIEPTLSKSSEHKLHTTSNSKKSLVSSASAKGQGRDEPRATVNTAKKMQHNHRSAPSRSSPTSADVSDGRLEKQLNAQKAINLDKNKRPDEAKIRNKKQHVIDPTPKNENGQALRAPPTPESLGIGGKQCTVRIGREK</sequence>
<accession>P0CV03</accession>